<organism>
    <name type="scientific">Exiguobacterium sibiricum (strain DSM 17290 / CCUG 55495 / CIP 109462 / JCM 13490 / 255-15)</name>
    <dbReference type="NCBI Taxonomy" id="262543"/>
    <lineage>
        <taxon>Bacteria</taxon>
        <taxon>Bacillati</taxon>
        <taxon>Bacillota</taxon>
        <taxon>Bacilli</taxon>
        <taxon>Bacillales</taxon>
        <taxon>Bacillales Family XII. Incertae Sedis</taxon>
        <taxon>Exiguobacterium</taxon>
    </lineage>
</organism>
<comment type="similarity">
    <text evidence="1">Belongs to the UPF0358 family.</text>
</comment>
<evidence type="ECO:0000255" key="1">
    <source>
        <dbReference type="HAMAP-Rule" id="MF_01560"/>
    </source>
</evidence>
<name>Y1994_EXIS2</name>
<dbReference type="EMBL" id="CP001022">
    <property type="protein sequence ID" value="ACB61446.1"/>
    <property type="molecule type" value="Genomic_DNA"/>
</dbReference>
<dbReference type="RefSeq" id="WP_012370864.1">
    <property type="nucleotide sequence ID" value="NC_010556.1"/>
</dbReference>
<dbReference type="SMR" id="B1YJ65"/>
<dbReference type="STRING" id="262543.Exig_1994"/>
<dbReference type="KEGG" id="esi:Exig_1994"/>
<dbReference type="eggNOG" id="COG4838">
    <property type="taxonomic scope" value="Bacteria"/>
</dbReference>
<dbReference type="HOGENOM" id="CLU_160493_1_0_9"/>
<dbReference type="OrthoDB" id="2135235at2"/>
<dbReference type="Proteomes" id="UP000001681">
    <property type="component" value="Chromosome"/>
</dbReference>
<dbReference type="Gene3D" id="1.10.287.750">
    <property type="entry name" value="SO2669-like"/>
    <property type="match status" value="1"/>
</dbReference>
<dbReference type="HAMAP" id="MF_01560">
    <property type="entry name" value="UPF0358"/>
    <property type="match status" value="1"/>
</dbReference>
<dbReference type="InterPro" id="IPR009983">
    <property type="entry name" value="UPF0358"/>
</dbReference>
<dbReference type="InterPro" id="IPR036270">
    <property type="entry name" value="UPF0358_sf"/>
</dbReference>
<dbReference type="NCBIfam" id="NF010187">
    <property type="entry name" value="PRK13666.1"/>
    <property type="match status" value="1"/>
</dbReference>
<dbReference type="Pfam" id="PF07408">
    <property type="entry name" value="DUF1507"/>
    <property type="match status" value="1"/>
</dbReference>
<dbReference type="SUPFAM" id="SSF140404">
    <property type="entry name" value="EF2458-like"/>
    <property type="match status" value="1"/>
</dbReference>
<feature type="chain" id="PRO_1000199631" description="UPF0358 protein Exig_1994">
    <location>
        <begin position="1"/>
        <end position="92"/>
    </location>
</feature>
<gene>
    <name type="ordered locus">Exig_1994</name>
</gene>
<reference key="1">
    <citation type="submission" date="2008-04" db="EMBL/GenBank/DDBJ databases">
        <title>Complete sequence of chromosome of Exiguobacterium sibiricum 255-15.</title>
        <authorList>
            <consortium name="US DOE Joint Genome Institute"/>
            <person name="Copeland A."/>
            <person name="Lucas S."/>
            <person name="Lapidus A."/>
            <person name="Glavina del Rio T."/>
            <person name="Dalin E."/>
            <person name="Tice H."/>
            <person name="Bruce D."/>
            <person name="Goodwin L."/>
            <person name="Pitluck S."/>
            <person name="Kiss H."/>
            <person name="Chertkov O."/>
            <person name="Monk C."/>
            <person name="Brettin T."/>
            <person name="Detter J.C."/>
            <person name="Han C."/>
            <person name="Kuske C.R."/>
            <person name="Schmutz J."/>
            <person name="Larimer F."/>
            <person name="Land M."/>
            <person name="Hauser L."/>
            <person name="Kyrpides N."/>
            <person name="Mikhailova N."/>
            <person name="Vishnivetskaya T."/>
            <person name="Rodrigues D.F."/>
            <person name="Gilichinsky D."/>
            <person name="Tiedje J."/>
            <person name="Richardson P."/>
        </authorList>
    </citation>
    <scope>NUCLEOTIDE SEQUENCE [LARGE SCALE GENOMIC DNA]</scope>
    <source>
        <strain>DSM 17290 / CCUG 55495 / CIP 109462 / JCM 13490 / 255-15</strain>
    </source>
</reference>
<accession>B1YJ65</accession>
<protein>
    <recommendedName>
        <fullName evidence="1">UPF0358 protein Exig_1994</fullName>
    </recommendedName>
</protein>
<keyword id="KW-1185">Reference proteome</keyword>
<sequence>MSTEIGTVHRQRALELLEADSHKIRRLIEVQLANLTMPQCPLYEEVLDTQMFGLSRQIDFAVRLELIDASEGKQLLDSLEQQLSDLHDAETC</sequence>
<proteinExistence type="inferred from homology"/>